<feature type="chain" id="PRO_0000255913" description="Chorismate pyruvate-lyase">
    <location>
        <begin position="1"/>
        <end position="174"/>
    </location>
</feature>
<feature type="binding site" evidence="1">
    <location>
        <position position="36"/>
    </location>
    <ligand>
        <name>substrate</name>
    </ligand>
</feature>
<feature type="binding site" evidence="1">
    <location>
        <position position="78"/>
    </location>
    <ligand>
        <name>substrate</name>
    </ligand>
</feature>
<feature type="binding site" evidence="1">
    <location>
        <position position="116"/>
    </location>
    <ligand>
        <name>substrate</name>
    </ligand>
</feature>
<feature type="binding site" evidence="1">
    <location>
        <position position="157"/>
    </location>
    <ligand>
        <name>substrate</name>
    </ligand>
</feature>
<reference key="1">
    <citation type="journal article" date="2006" name="J. Bacteriol.">
        <title>Complete genome sequence of Yersinia pestis strains Antiqua and Nepal516: evidence of gene reduction in an emerging pathogen.</title>
        <authorList>
            <person name="Chain P.S.G."/>
            <person name="Hu P."/>
            <person name="Malfatti S.A."/>
            <person name="Radnedge L."/>
            <person name="Larimer F."/>
            <person name="Vergez L.M."/>
            <person name="Worsham P."/>
            <person name="Chu M.C."/>
            <person name="Andersen G.L."/>
        </authorList>
    </citation>
    <scope>NUCLEOTIDE SEQUENCE [LARGE SCALE GENOMIC DNA]</scope>
    <source>
        <strain>Antiqua</strain>
    </source>
</reference>
<proteinExistence type="inferred from homology"/>
<dbReference type="EC" id="4.1.3.40" evidence="1"/>
<dbReference type="EMBL" id="CP000308">
    <property type="protein sequence ID" value="ABG15935.1"/>
    <property type="molecule type" value="Genomic_DNA"/>
</dbReference>
<dbReference type="RefSeq" id="WP_002209087.1">
    <property type="nucleotide sequence ID" value="NZ_CP009906.1"/>
</dbReference>
<dbReference type="SMR" id="Q1C0T7"/>
<dbReference type="GeneID" id="57974294"/>
<dbReference type="KEGG" id="ypa:YPA_3974"/>
<dbReference type="UniPathway" id="UPA00232"/>
<dbReference type="Proteomes" id="UP000001971">
    <property type="component" value="Chromosome"/>
</dbReference>
<dbReference type="GO" id="GO:0005829">
    <property type="term" value="C:cytosol"/>
    <property type="evidence" value="ECO:0007669"/>
    <property type="project" value="TreeGrafter"/>
</dbReference>
<dbReference type="GO" id="GO:0008813">
    <property type="term" value="F:chorismate lyase activity"/>
    <property type="evidence" value="ECO:0007669"/>
    <property type="project" value="UniProtKB-UniRule"/>
</dbReference>
<dbReference type="GO" id="GO:0042866">
    <property type="term" value="P:pyruvate biosynthetic process"/>
    <property type="evidence" value="ECO:0007669"/>
    <property type="project" value="UniProtKB-UniRule"/>
</dbReference>
<dbReference type="GO" id="GO:0006744">
    <property type="term" value="P:ubiquinone biosynthetic process"/>
    <property type="evidence" value="ECO:0007669"/>
    <property type="project" value="UniProtKB-UniRule"/>
</dbReference>
<dbReference type="Gene3D" id="3.40.1410.10">
    <property type="entry name" value="Chorismate lyase-like"/>
    <property type="match status" value="1"/>
</dbReference>
<dbReference type="HAMAP" id="MF_01632">
    <property type="entry name" value="UbiC"/>
    <property type="match status" value="1"/>
</dbReference>
<dbReference type="InterPro" id="IPR007440">
    <property type="entry name" value="Chorismate--pyruvate_lyase"/>
</dbReference>
<dbReference type="InterPro" id="IPR028978">
    <property type="entry name" value="Chorismate_lyase_/UTRA_dom_sf"/>
</dbReference>
<dbReference type="NCBIfam" id="NF008656">
    <property type="entry name" value="PRK11655.1"/>
    <property type="match status" value="1"/>
</dbReference>
<dbReference type="PANTHER" id="PTHR38683">
    <property type="entry name" value="CHORISMATE PYRUVATE-LYASE"/>
    <property type="match status" value="1"/>
</dbReference>
<dbReference type="PANTHER" id="PTHR38683:SF1">
    <property type="entry name" value="CHORISMATE PYRUVATE-LYASE"/>
    <property type="match status" value="1"/>
</dbReference>
<dbReference type="Pfam" id="PF04345">
    <property type="entry name" value="Chor_lyase"/>
    <property type="match status" value="1"/>
</dbReference>
<dbReference type="SUPFAM" id="SSF64288">
    <property type="entry name" value="Chorismate lyase-like"/>
    <property type="match status" value="1"/>
</dbReference>
<gene>
    <name evidence="1" type="primary">ubiC</name>
    <name type="ordered locus">YPA_3974</name>
</gene>
<name>UBIC_YERPA</name>
<sequence length="174" mass="19916">MFIGDASILKPIQWCATEHPELPADIADWLMELGSMTRRFEQHCQRVHVEPQRECFITRDALGEEAEHLPVSQRYWLREIVLFGDNVPWLLGRTVIPEETLSGPDRALVDLGTLPLGRYLFSGDALTRDYIHVGRQDNLWARRSLLRLSGNPLLLTEVFLPASPLYTHCDSIPK</sequence>
<protein>
    <recommendedName>
        <fullName evidence="1">Chorismate pyruvate-lyase</fullName>
        <shortName evidence="1">CL</shortName>
        <shortName evidence="1">CPL</shortName>
        <ecNumber evidence="1">4.1.3.40</ecNumber>
    </recommendedName>
</protein>
<accession>Q1C0T7</accession>
<evidence type="ECO:0000255" key="1">
    <source>
        <dbReference type="HAMAP-Rule" id="MF_01632"/>
    </source>
</evidence>
<organism>
    <name type="scientific">Yersinia pestis bv. Antiqua (strain Antiqua)</name>
    <dbReference type="NCBI Taxonomy" id="360102"/>
    <lineage>
        <taxon>Bacteria</taxon>
        <taxon>Pseudomonadati</taxon>
        <taxon>Pseudomonadota</taxon>
        <taxon>Gammaproteobacteria</taxon>
        <taxon>Enterobacterales</taxon>
        <taxon>Yersiniaceae</taxon>
        <taxon>Yersinia</taxon>
    </lineage>
</organism>
<keyword id="KW-0963">Cytoplasm</keyword>
<keyword id="KW-0456">Lyase</keyword>
<keyword id="KW-0670">Pyruvate</keyword>
<keyword id="KW-0831">Ubiquinone biosynthesis</keyword>
<comment type="function">
    <text evidence="1">Removes the pyruvyl group from chorismate, with concomitant aromatization of the ring, to provide 4-hydroxybenzoate (4HB) for the ubiquinone pathway.</text>
</comment>
<comment type="catalytic activity">
    <reaction evidence="1">
        <text>chorismate = 4-hydroxybenzoate + pyruvate</text>
        <dbReference type="Rhea" id="RHEA:16505"/>
        <dbReference type="ChEBI" id="CHEBI:15361"/>
        <dbReference type="ChEBI" id="CHEBI:17879"/>
        <dbReference type="ChEBI" id="CHEBI:29748"/>
        <dbReference type="EC" id="4.1.3.40"/>
    </reaction>
</comment>
<comment type="pathway">
    <text evidence="1">Cofactor biosynthesis; ubiquinone biosynthesis.</text>
</comment>
<comment type="subunit">
    <text evidence="1">Monomer.</text>
</comment>
<comment type="subcellular location">
    <subcellularLocation>
        <location evidence="1">Cytoplasm</location>
    </subcellularLocation>
</comment>
<comment type="similarity">
    <text evidence="1">Belongs to the UbiC family.</text>
</comment>